<proteinExistence type="inferred from homology"/>
<sequence length="611" mass="67205">MLAWRQLNDLEETVTYDVIIRDGLWFDGTGNAPLTRTLGIRDGVVATVAAGALDETGCPEVVDAAGKWVVPGFIDVHTHYDAEVLLDPGLRESVRHGVTTVLLGNCSLSTVYANSEDAADLFSRVEAVPREFVLGALRDNQTWSTPAEYIEAIDALPLGPNVSSLLGHSDLRTAVLGLDRATDDTVRPTEAELAKMAKLLDEALEAGMLGMSGMDAAIDKLDGDRFRSRALPSTFATWRERRKLISVLRHRGRILQSAPDVDNPVSALLFFLASSRIFNRRKGVRMSMLVSADAKSMPLAVHVFGLGTRVLNKLLGSQVRFQHLPVPFELYSDGIDLPVFEEFGAGTAALHLRDQLQRNELLADRSYRRSFRREFDRIKLGPSLWHRDFHDAVIVECPDKSLIGKSFGAIADERGLHPLDAFLDVLVDNGERNVRWTTIVANHRPNQLNKLAAEPSVHMGFSDAGAHLRNMAFYNFGLRLLKRARDADRAGQPFLSIERAVYRLTGELAEWFGIGAGTLRQGDRADFAVIDPTHLDESVDGYHEEAVPYYGGLRRMVNRNDATVVATGVGGTVVFRGGQFGGQFRDGYGQNVKSGRYLRAGELGAALSRSA</sequence>
<accession>P65531</accession>
<accession>A0A1R3Y2Z2</accession>
<accession>Q10830</accession>
<accession>X2BLZ8</accession>
<dbReference type="EMBL" id="LT708304">
    <property type="protein sequence ID" value="SIU01558.1"/>
    <property type="molecule type" value="Genomic_DNA"/>
</dbReference>
<dbReference type="RefSeq" id="NP_856582.1">
    <property type="nucleotide sequence ID" value="NC_002945.3"/>
</dbReference>
<dbReference type="RefSeq" id="WP_003899536.1">
    <property type="nucleotide sequence ID" value="NC_002945.4"/>
</dbReference>
<dbReference type="SMR" id="P65531"/>
<dbReference type="KEGG" id="mbo:BQ2027_MB2937C"/>
<dbReference type="PATRIC" id="fig|233413.5.peg.3223"/>
<dbReference type="Proteomes" id="UP000001419">
    <property type="component" value="Chromosome"/>
</dbReference>
<dbReference type="GO" id="GO:0005829">
    <property type="term" value="C:cytosol"/>
    <property type="evidence" value="ECO:0007669"/>
    <property type="project" value="TreeGrafter"/>
</dbReference>
<dbReference type="GO" id="GO:0016812">
    <property type="term" value="F:hydrolase activity, acting on carbon-nitrogen (but not peptide) bonds, in cyclic amides"/>
    <property type="evidence" value="ECO:0007669"/>
    <property type="project" value="TreeGrafter"/>
</dbReference>
<dbReference type="Gene3D" id="3.20.20.140">
    <property type="entry name" value="Metal-dependent hydrolases"/>
    <property type="match status" value="1"/>
</dbReference>
<dbReference type="InterPro" id="IPR013108">
    <property type="entry name" value="Amidohydro_3"/>
</dbReference>
<dbReference type="InterPro" id="IPR011059">
    <property type="entry name" value="Metal-dep_hydrolase_composite"/>
</dbReference>
<dbReference type="InterPro" id="IPR032466">
    <property type="entry name" value="Metal_Hydrolase"/>
</dbReference>
<dbReference type="InterPro" id="IPR050378">
    <property type="entry name" value="Metallo-dep_Hydrolases_sf"/>
</dbReference>
<dbReference type="PANTHER" id="PTHR11647:SF1">
    <property type="entry name" value="COLLAPSIN RESPONSE MEDIATOR PROTEIN"/>
    <property type="match status" value="1"/>
</dbReference>
<dbReference type="PANTHER" id="PTHR11647">
    <property type="entry name" value="HYDRANTOINASE/DIHYDROPYRIMIDINASE FAMILY MEMBER"/>
    <property type="match status" value="1"/>
</dbReference>
<dbReference type="Pfam" id="PF07969">
    <property type="entry name" value="Amidohydro_3"/>
    <property type="match status" value="1"/>
</dbReference>
<dbReference type="SUPFAM" id="SSF51338">
    <property type="entry name" value="Composite domain of metallo-dependent hydrolases"/>
    <property type="match status" value="1"/>
</dbReference>
<dbReference type="SUPFAM" id="SSF51556">
    <property type="entry name" value="Metallo-dependent hydrolases"/>
    <property type="match status" value="1"/>
</dbReference>
<keyword id="KW-0378">Hydrolase</keyword>
<keyword id="KW-1185">Reference proteome</keyword>
<comment type="similarity">
    <text evidence="1">Belongs to the metallo-dependent hydrolases superfamily. N-acyl-D-amino-acid deacylase family.</text>
</comment>
<name>Y2937_MYCBO</name>
<protein>
    <recommendedName>
        <fullName>Uncharacterized protein Mb2937c</fullName>
    </recommendedName>
</protein>
<organism>
    <name type="scientific">Mycobacterium bovis (strain ATCC BAA-935 / AF2122/97)</name>
    <dbReference type="NCBI Taxonomy" id="233413"/>
    <lineage>
        <taxon>Bacteria</taxon>
        <taxon>Bacillati</taxon>
        <taxon>Actinomycetota</taxon>
        <taxon>Actinomycetes</taxon>
        <taxon>Mycobacteriales</taxon>
        <taxon>Mycobacteriaceae</taxon>
        <taxon>Mycobacterium</taxon>
        <taxon>Mycobacterium tuberculosis complex</taxon>
    </lineage>
</organism>
<gene>
    <name type="ordered locus">BQ2027_MB2937C</name>
</gene>
<feature type="chain" id="PRO_0000182709" description="Uncharacterized protein Mb2937c">
    <location>
        <begin position="1"/>
        <end position="611"/>
    </location>
</feature>
<reference key="1">
    <citation type="journal article" date="2003" name="Proc. Natl. Acad. Sci. U.S.A.">
        <title>The complete genome sequence of Mycobacterium bovis.</title>
        <authorList>
            <person name="Garnier T."/>
            <person name="Eiglmeier K."/>
            <person name="Camus J.-C."/>
            <person name="Medina N."/>
            <person name="Mansoor H."/>
            <person name="Pryor M."/>
            <person name="Duthoy S."/>
            <person name="Grondin S."/>
            <person name="Lacroix C."/>
            <person name="Monsempe C."/>
            <person name="Simon S."/>
            <person name="Harris B."/>
            <person name="Atkin R."/>
            <person name="Doggett J."/>
            <person name="Mayes R."/>
            <person name="Keating L."/>
            <person name="Wheeler P.R."/>
            <person name="Parkhill J."/>
            <person name="Barrell B.G."/>
            <person name="Cole S.T."/>
            <person name="Gordon S.V."/>
            <person name="Hewinson R.G."/>
        </authorList>
    </citation>
    <scope>NUCLEOTIDE SEQUENCE [LARGE SCALE GENOMIC DNA]</scope>
    <source>
        <strain>ATCC BAA-935 / AF2122/97</strain>
    </source>
</reference>
<reference key="2">
    <citation type="journal article" date="2017" name="Genome Announc.">
        <title>Updated reference genome sequence and annotation of Mycobacterium bovis AF2122/97.</title>
        <authorList>
            <person name="Malone K.M."/>
            <person name="Farrell D."/>
            <person name="Stuber T.P."/>
            <person name="Schubert O.T."/>
            <person name="Aebersold R."/>
            <person name="Robbe-Austerman S."/>
            <person name="Gordon S.V."/>
        </authorList>
    </citation>
    <scope>NUCLEOTIDE SEQUENCE [LARGE SCALE GENOMIC DNA]</scope>
    <scope>GENOME REANNOTATION</scope>
    <source>
        <strain>ATCC BAA-935 / AF2122/97</strain>
    </source>
</reference>
<evidence type="ECO:0000305" key="1"/>